<reference key="1">
    <citation type="journal article" date="2010" name="Genome Biol. Evol.">
        <title>Continuing evolution of Burkholderia mallei through genome reduction and large-scale rearrangements.</title>
        <authorList>
            <person name="Losada L."/>
            <person name="Ronning C.M."/>
            <person name="DeShazer D."/>
            <person name="Woods D."/>
            <person name="Fedorova N."/>
            <person name="Kim H.S."/>
            <person name="Shabalina S.A."/>
            <person name="Pearson T.R."/>
            <person name="Brinkac L."/>
            <person name="Tan P."/>
            <person name="Nandi T."/>
            <person name="Crabtree J."/>
            <person name="Badger J."/>
            <person name="Beckstrom-Sternberg S."/>
            <person name="Saqib M."/>
            <person name="Schutzer S.E."/>
            <person name="Keim P."/>
            <person name="Nierman W.C."/>
        </authorList>
    </citation>
    <scope>NUCLEOTIDE SEQUENCE [LARGE SCALE GENOMIC DNA]</scope>
    <source>
        <strain>668</strain>
    </source>
</reference>
<name>COXX_BURP6</name>
<feature type="chain" id="PRO_0000327031" description="Protoheme IX farnesyltransferase">
    <location>
        <begin position="1"/>
        <end position="300"/>
    </location>
</feature>
<feature type="transmembrane region" description="Helical" evidence="1">
    <location>
        <begin position="24"/>
        <end position="44"/>
    </location>
</feature>
<feature type="transmembrane region" description="Helical" evidence="1">
    <location>
        <begin position="48"/>
        <end position="68"/>
    </location>
</feature>
<feature type="transmembrane region" description="Helical" evidence="1">
    <location>
        <begin position="94"/>
        <end position="114"/>
    </location>
</feature>
<feature type="transmembrane region" description="Helical" evidence="1">
    <location>
        <begin position="118"/>
        <end position="138"/>
    </location>
</feature>
<feature type="transmembrane region" description="Helical" evidence="1">
    <location>
        <begin position="146"/>
        <end position="166"/>
    </location>
</feature>
<feature type="transmembrane region" description="Helical" evidence="1">
    <location>
        <begin position="172"/>
        <end position="192"/>
    </location>
</feature>
<feature type="transmembrane region" description="Helical" evidence="1">
    <location>
        <begin position="217"/>
        <end position="237"/>
    </location>
</feature>
<feature type="transmembrane region" description="Helical" evidence="1">
    <location>
        <begin position="239"/>
        <end position="259"/>
    </location>
</feature>
<feature type="transmembrane region" description="Helical" evidence="1">
    <location>
        <begin position="278"/>
        <end position="298"/>
    </location>
</feature>
<dbReference type="EC" id="2.5.1.141" evidence="1"/>
<dbReference type="EMBL" id="CP000570">
    <property type="protein sequence ID" value="ABN83777.1"/>
    <property type="molecule type" value="Genomic_DNA"/>
</dbReference>
<dbReference type="SMR" id="A3N5D1"/>
<dbReference type="KEGG" id="bpd:BURPS668_0499"/>
<dbReference type="HOGENOM" id="CLU_029631_0_2_4"/>
<dbReference type="UniPathway" id="UPA00834">
    <property type="reaction ID" value="UER00712"/>
</dbReference>
<dbReference type="GO" id="GO:0005886">
    <property type="term" value="C:plasma membrane"/>
    <property type="evidence" value="ECO:0007669"/>
    <property type="project" value="UniProtKB-SubCell"/>
</dbReference>
<dbReference type="GO" id="GO:0008495">
    <property type="term" value="F:protoheme IX farnesyltransferase activity"/>
    <property type="evidence" value="ECO:0007669"/>
    <property type="project" value="UniProtKB-UniRule"/>
</dbReference>
<dbReference type="GO" id="GO:0048034">
    <property type="term" value="P:heme O biosynthetic process"/>
    <property type="evidence" value="ECO:0007669"/>
    <property type="project" value="UniProtKB-UniRule"/>
</dbReference>
<dbReference type="CDD" id="cd13957">
    <property type="entry name" value="PT_UbiA_Cox10"/>
    <property type="match status" value="1"/>
</dbReference>
<dbReference type="Gene3D" id="1.10.357.140">
    <property type="entry name" value="UbiA prenyltransferase"/>
    <property type="match status" value="1"/>
</dbReference>
<dbReference type="HAMAP" id="MF_00154">
    <property type="entry name" value="CyoE_CtaB"/>
    <property type="match status" value="1"/>
</dbReference>
<dbReference type="InterPro" id="IPR006369">
    <property type="entry name" value="Protohaem_IX_farnesylTrfase"/>
</dbReference>
<dbReference type="InterPro" id="IPR000537">
    <property type="entry name" value="UbiA_prenyltransferase"/>
</dbReference>
<dbReference type="InterPro" id="IPR030470">
    <property type="entry name" value="UbiA_prenylTrfase_CS"/>
</dbReference>
<dbReference type="InterPro" id="IPR044878">
    <property type="entry name" value="UbiA_sf"/>
</dbReference>
<dbReference type="NCBIfam" id="TIGR01473">
    <property type="entry name" value="cyoE_ctaB"/>
    <property type="match status" value="1"/>
</dbReference>
<dbReference type="NCBIfam" id="NF003349">
    <property type="entry name" value="PRK04375.1-2"/>
    <property type="match status" value="1"/>
</dbReference>
<dbReference type="PANTHER" id="PTHR43448:SF7">
    <property type="entry name" value="4-HYDROXYBENZOATE SOLANESYLTRANSFERASE"/>
    <property type="match status" value="1"/>
</dbReference>
<dbReference type="PANTHER" id="PTHR43448">
    <property type="entry name" value="PROTOHEME IX FARNESYLTRANSFERASE, MITOCHONDRIAL"/>
    <property type="match status" value="1"/>
</dbReference>
<dbReference type="Pfam" id="PF01040">
    <property type="entry name" value="UbiA"/>
    <property type="match status" value="1"/>
</dbReference>
<dbReference type="PROSITE" id="PS00943">
    <property type="entry name" value="UBIA"/>
    <property type="match status" value="1"/>
</dbReference>
<protein>
    <recommendedName>
        <fullName evidence="1">Protoheme IX farnesyltransferase</fullName>
        <ecNumber evidence="1">2.5.1.141</ecNumber>
    </recommendedName>
    <alternativeName>
        <fullName evidence="1">Heme B farnesyltransferase</fullName>
    </alternativeName>
    <alternativeName>
        <fullName evidence="1">Heme O synthase</fullName>
    </alternativeName>
</protein>
<keyword id="KW-0997">Cell inner membrane</keyword>
<keyword id="KW-1003">Cell membrane</keyword>
<keyword id="KW-0350">Heme biosynthesis</keyword>
<keyword id="KW-0472">Membrane</keyword>
<keyword id="KW-0808">Transferase</keyword>
<keyword id="KW-0812">Transmembrane</keyword>
<keyword id="KW-1133">Transmembrane helix</keyword>
<gene>
    <name evidence="1" type="primary">ctaB</name>
    <name type="ordered locus">BURPS668_0499</name>
</gene>
<sequence>MDTTLSHTPGSRLSQYLALTKPRVTQLAVFCAVIGMFLATPGMVPWKVLLGGTIGIGLLAGSAFAINCLVEQKIDAMMRRTAWRPSARGEITTLQILAFSTVLGGLGAWTLYTFTNPLTMWLTIATFVGYAVIYTLLLKPMTPQNIVIGGASGAMPPALGWAAVTGAVPGDAWILVLIIFVWTPPHFWVLALYRRKDYENAGLPMLPVTHGEQFTRLHILLYTVILFAVTMMPFISGMSGAVYLTSAVLLGALFLAYAWKIYRDYSDALARRAFRYSIVYLSLLFAALLVDHYARPVIGM</sequence>
<accession>A3N5D1</accession>
<proteinExistence type="inferred from homology"/>
<organism>
    <name type="scientific">Burkholderia pseudomallei (strain 668)</name>
    <dbReference type="NCBI Taxonomy" id="320373"/>
    <lineage>
        <taxon>Bacteria</taxon>
        <taxon>Pseudomonadati</taxon>
        <taxon>Pseudomonadota</taxon>
        <taxon>Betaproteobacteria</taxon>
        <taxon>Burkholderiales</taxon>
        <taxon>Burkholderiaceae</taxon>
        <taxon>Burkholderia</taxon>
        <taxon>pseudomallei group</taxon>
    </lineage>
</organism>
<comment type="function">
    <text evidence="1">Converts heme B (protoheme IX) to heme O by substitution of the vinyl group on carbon 2 of heme B porphyrin ring with a hydroxyethyl farnesyl side group.</text>
</comment>
<comment type="catalytic activity">
    <reaction evidence="1">
        <text>heme b + (2E,6E)-farnesyl diphosphate + H2O = Fe(II)-heme o + diphosphate</text>
        <dbReference type="Rhea" id="RHEA:28070"/>
        <dbReference type="ChEBI" id="CHEBI:15377"/>
        <dbReference type="ChEBI" id="CHEBI:33019"/>
        <dbReference type="ChEBI" id="CHEBI:60344"/>
        <dbReference type="ChEBI" id="CHEBI:60530"/>
        <dbReference type="ChEBI" id="CHEBI:175763"/>
        <dbReference type="EC" id="2.5.1.141"/>
    </reaction>
</comment>
<comment type="pathway">
    <text evidence="1">Porphyrin-containing compound metabolism; heme O biosynthesis; heme O from protoheme: step 1/1.</text>
</comment>
<comment type="subcellular location">
    <subcellularLocation>
        <location evidence="1">Cell inner membrane</location>
        <topology evidence="1">Multi-pass membrane protein</topology>
    </subcellularLocation>
</comment>
<comment type="miscellaneous">
    <text evidence="1">Carbon 2 of the heme B porphyrin ring is defined according to the Fischer nomenclature.</text>
</comment>
<comment type="similarity">
    <text evidence="1">Belongs to the UbiA prenyltransferase family. Protoheme IX farnesyltransferase subfamily.</text>
</comment>
<evidence type="ECO:0000255" key="1">
    <source>
        <dbReference type="HAMAP-Rule" id="MF_00154"/>
    </source>
</evidence>